<dbReference type="EC" id="6.1.1.10" evidence="1"/>
<dbReference type="EMBL" id="BA000018">
    <property type="protein sequence ID" value="BAB41678.1"/>
    <property type="molecule type" value="Genomic_DNA"/>
</dbReference>
<dbReference type="PIR" id="C89815">
    <property type="entry name" value="C89815"/>
</dbReference>
<dbReference type="RefSeq" id="WP_001051129.1">
    <property type="nucleotide sequence ID" value="NC_002745.2"/>
</dbReference>
<dbReference type="SMR" id="P67579"/>
<dbReference type="EnsemblBacteria" id="BAB41678">
    <property type="protein sequence ID" value="BAB41678"/>
    <property type="gene ID" value="BAB41678"/>
</dbReference>
<dbReference type="KEGG" id="sau:SA0448"/>
<dbReference type="HOGENOM" id="CLU_009710_9_4_9"/>
<dbReference type="GO" id="GO:0005737">
    <property type="term" value="C:cytoplasm"/>
    <property type="evidence" value="ECO:0007669"/>
    <property type="project" value="UniProtKB-SubCell"/>
</dbReference>
<dbReference type="GO" id="GO:0005524">
    <property type="term" value="F:ATP binding"/>
    <property type="evidence" value="ECO:0007669"/>
    <property type="project" value="UniProtKB-UniRule"/>
</dbReference>
<dbReference type="GO" id="GO:0004825">
    <property type="term" value="F:methionine-tRNA ligase activity"/>
    <property type="evidence" value="ECO:0007669"/>
    <property type="project" value="UniProtKB-UniRule"/>
</dbReference>
<dbReference type="GO" id="GO:0000049">
    <property type="term" value="F:tRNA binding"/>
    <property type="evidence" value="ECO:0007669"/>
    <property type="project" value="UniProtKB-KW"/>
</dbReference>
<dbReference type="GO" id="GO:0006431">
    <property type="term" value="P:methionyl-tRNA aminoacylation"/>
    <property type="evidence" value="ECO:0007669"/>
    <property type="project" value="UniProtKB-UniRule"/>
</dbReference>
<dbReference type="CDD" id="cd07957">
    <property type="entry name" value="Anticodon_Ia_Met"/>
    <property type="match status" value="1"/>
</dbReference>
<dbReference type="CDD" id="cd00814">
    <property type="entry name" value="MetRS_core"/>
    <property type="match status" value="1"/>
</dbReference>
<dbReference type="CDD" id="cd02800">
    <property type="entry name" value="tRNA_bind_EcMetRS_like"/>
    <property type="match status" value="1"/>
</dbReference>
<dbReference type="FunFam" id="1.10.730.10:FF:000026">
    <property type="entry name" value="Methionine--tRNA ligase"/>
    <property type="match status" value="1"/>
</dbReference>
<dbReference type="FunFam" id="2.170.220.10:FF:000002">
    <property type="entry name" value="Methionine--tRNA ligase"/>
    <property type="match status" value="1"/>
</dbReference>
<dbReference type="FunFam" id="2.40.50.140:FF:000042">
    <property type="entry name" value="Methionine--tRNA ligase"/>
    <property type="match status" value="1"/>
</dbReference>
<dbReference type="Gene3D" id="2.170.220.10">
    <property type="match status" value="1"/>
</dbReference>
<dbReference type="Gene3D" id="3.40.50.620">
    <property type="entry name" value="HUPs"/>
    <property type="match status" value="1"/>
</dbReference>
<dbReference type="Gene3D" id="1.10.730.10">
    <property type="entry name" value="Isoleucyl-tRNA Synthetase, Domain 1"/>
    <property type="match status" value="1"/>
</dbReference>
<dbReference type="Gene3D" id="2.40.50.140">
    <property type="entry name" value="Nucleic acid-binding proteins"/>
    <property type="match status" value="1"/>
</dbReference>
<dbReference type="HAMAP" id="MF_01228">
    <property type="entry name" value="Met_tRNA_synth_type2"/>
    <property type="match status" value="1"/>
</dbReference>
<dbReference type="InterPro" id="IPR001412">
    <property type="entry name" value="aa-tRNA-synth_I_CS"/>
</dbReference>
<dbReference type="InterPro" id="IPR041872">
    <property type="entry name" value="Anticodon_Met"/>
</dbReference>
<dbReference type="InterPro" id="IPR013155">
    <property type="entry name" value="M/V/L/I-tRNA-synth_anticd-bd"/>
</dbReference>
<dbReference type="InterPro" id="IPR004495">
    <property type="entry name" value="Met-tRNA-synth_bsu_C"/>
</dbReference>
<dbReference type="InterPro" id="IPR014758">
    <property type="entry name" value="Met-tRNA_synth"/>
</dbReference>
<dbReference type="InterPro" id="IPR023457">
    <property type="entry name" value="Met-tRNA_synth_2"/>
</dbReference>
<dbReference type="InterPro" id="IPR015413">
    <property type="entry name" value="Methionyl/Leucyl_tRNA_Synth"/>
</dbReference>
<dbReference type="InterPro" id="IPR033911">
    <property type="entry name" value="MetRS_core"/>
</dbReference>
<dbReference type="InterPro" id="IPR012340">
    <property type="entry name" value="NA-bd_OB-fold"/>
</dbReference>
<dbReference type="InterPro" id="IPR014729">
    <property type="entry name" value="Rossmann-like_a/b/a_fold"/>
</dbReference>
<dbReference type="InterPro" id="IPR002547">
    <property type="entry name" value="tRNA-bd_dom"/>
</dbReference>
<dbReference type="InterPro" id="IPR009080">
    <property type="entry name" value="tRNAsynth_Ia_anticodon-bd"/>
</dbReference>
<dbReference type="NCBIfam" id="TIGR00398">
    <property type="entry name" value="metG"/>
    <property type="match status" value="1"/>
</dbReference>
<dbReference type="NCBIfam" id="TIGR00399">
    <property type="entry name" value="metG_C_term"/>
    <property type="match status" value="1"/>
</dbReference>
<dbReference type="NCBIfam" id="NF008900">
    <property type="entry name" value="PRK12267.1"/>
    <property type="match status" value="1"/>
</dbReference>
<dbReference type="PANTHER" id="PTHR43326:SF1">
    <property type="entry name" value="METHIONINE--TRNA LIGASE, MITOCHONDRIAL"/>
    <property type="match status" value="1"/>
</dbReference>
<dbReference type="PANTHER" id="PTHR43326">
    <property type="entry name" value="METHIONYL-TRNA SYNTHETASE"/>
    <property type="match status" value="1"/>
</dbReference>
<dbReference type="Pfam" id="PF08264">
    <property type="entry name" value="Anticodon_1"/>
    <property type="match status" value="1"/>
</dbReference>
<dbReference type="Pfam" id="PF09334">
    <property type="entry name" value="tRNA-synt_1g"/>
    <property type="match status" value="1"/>
</dbReference>
<dbReference type="Pfam" id="PF01588">
    <property type="entry name" value="tRNA_bind"/>
    <property type="match status" value="1"/>
</dbReference>
<dbReference type="PRINTS" id="PR01041">
    <property type="entry name" value="TRNASYNTHMET"/>
</dbReference>
<dbReference type="SUPFAM" id="SSF47323">
    <property type="entry name" value="Anticodon-binding domain of a subclass of class I aminoacyl-tRNA synthetases"/>
    <property type="match status" value="1"/>
</dbReference>
<dbReference type="SUPFAM" id="SSF50249">
    <property type="entry name" value="Nucleic acid-binding proteins"/>
    <property type="match status" value="1"/>
</dbReference>
<dbReference type="SUPFAM" id="SSF52374">
    <property type="entry name" value="Nucleotidylyl transferase"/>
    <property type="match status" value="1"/>
</dbReference>
<dbReference type="PROSITE" id="PS00178">
    <property type="entry name" value="AA_TRNA_LIGASE_I"/>
    <property type="match status" value="1"/>
</dbReference>
<dbReference type="PROSITE" id="PS50886">
    <property type="entry name" value="TRBD"/>
    <property type="match status" value="1"/>
</dbReference>
<feature type="chain" id="PRO_0000139241" description="Methionine--tRNA ligase">
    <location>
        <begin position="1"/>
        <end position="657"/>
    </location>
</feature>
<feature type="domain" description="tRNA-binding" evidence="1">
    <location>
        <begin position="557"/>
        <end position="657"/>
    </location>
</feature>
<feature type="short sequence motif" description="'HIGH' region">
    <location>
        <begin position="13"/>
        <end position="23"/>
    </location>
</feature>
<feature type="short sequence motif" description="'KMSKS' region">
    <location>
        <begin position="308"/>
        <end position="312"/>
    </location>
</feature>
<feature type="binding site" evidence="1">
    <location>
        <position position="311"/>
    </location>
    <ligand>
        <name>ATP</name>
        <dbReference type="ChEBI" id="CHEBI:30616"/>
    </ligand>
</feature>
<name>SYM_STAAN</name>
<keyword id="KW-0030">Aminoacyl-tRNA synthetase</keyword>
<keyword id="KW-0067">ATP-binding</keyword>
<keyword id="KW-0963">Cytoplasm</keyword>
<keyword id="KW-0436">Ligase</keyword>
<keyword id="KW-0547">Nucleotide-binding</keyword>
<keyword id="KW-0648">Protein biosynthesis</keyword>
<keyword id="KW-0694">RNA-binding</keyword>
<keyword id="KW-0820">tRNA-binding</keyword>
<proteinExistence type="evidence at protein level"/>
<comment type="function">
    <text evidence="1">Is required not only for elongation of protein synthesis but also for the initiation of all mRNA translation through initiator tRNA(fMet) aminoacylation.</text>
</comment>
<comment type="catalytic activity">
    <reaction evidence="1">
        <text>tRNA(Met) + L-methionine + ATP = L-methionyl-tRNA(Met) + AMP + diphosphate</text>
        <dbReference type="Rhea" id="RHEA:13481"/>
        <dbReference type="Rhea" id="RHEA-COMP:9667"/>
        <dbReference type="Rhea" id="RHEA-COMP:9698"/>
        <dbReference type="ChEBI" id="CHEBI:30616"/>
        <dbReference type="ChEBI" id="CHEBI:33019"/>
        <dbReference type="ChEBI" id="CHEBI:57844"/>
        <dbReference type="ChEBI" id="CHEBI:78442"/>
        <dbReference type="ChEBI" id="CHEBI:78530"/>
        <dbReference type="ChEBI" id="CHEBI:456215"/>
        <dbReference type="EC" id="6.1.1.10"/>
    </reaction>
</comment>
<comment type="subunit">
    <text evidence="1">Homodimer.</text>
</comment>
<comment type="subcellular location">
    <subcellularLocation>
        <location evidence="1">Cytoplasm</location>
    </subcellularLocation>
</comment>
<comment type="similarity">
    <text evidence="1">Belongs to the class-I aminoacyl-tRNA synthetase family. MetG type 2B subfamily.</text>
</comment>
<sequence>MAKETFYITTPIYYPSGNLHIGHAYSTVAGDVIARYKRMQGYDVRYLTGTDEHGQKIQEKAQKAGKTEIEYLDEMIAGIKQLWAKLEISNDDFIRTTEERHKHVVEQVFERLLKQGDIYLGEYEGWYSVPDETYYTESQLVDPQYENGKIIGGKSPDSGHEVELVKEESYFFNISKYTDRLLEFYDQNPDFIQPPSRKNEMINNFIKPGLADLAVSRTSFNWGVHVPSNPKHVVYVWIDALVNYISALGYLSDDESLFNKYWPADIHLMAKEIVRFHSIIWPILLMALDLPLPKKVFAHGWILMKDGKMSKSKGNVVDPNILIDRYGLDATRYYLMRELPFGSDGVFTPEAFVERTNFDLANDLGNLVNRTISMVNKYFDGELPAYQGPLHELDEEMEAMALETVKSYTESMESLQFSVALSTVWKFISRTNKYIDETTPWVLAKDDSQKDMLGNVMAHLVENIRYAAVLLRPFLTHAPKEIFEQLNINNPQFMEFSSLEQYGVLTESIMVTGQPKPIFPRLDSEAEIAYIKESMQPPATEEEKEEIPSKPQIDIKDFDKVEIKAATIIDAEHVKKSDKLLKIQVDLDSEQRQIVSGIAKFYTPDDIIGKKVAVVTNLKPAKLMGQKSEGMILSAEKDGVLTLVSLPSAIPNGAVIK</sequence>
<reference key="1">
    <citation type="journal article" date="2001" name="Lancet">
        <title>Whole genome sequencing of meticillin-resistant Staphylococcus aureus.</title>
        <authorList>
            <person name="Kuroda M."/>
            <person name="Ohta T."/>
            <person name="Uchiyama I."/>
            <person name="Baba T."/>
            <person name="Yuzawa H."/>
            <person name="Kobayashi I."/>
            <person name="Cui L."/>
            <person name="Oguchi A."/>
            <person name="Aoki K."/>
            <person name="Nagai Y."/>
            <person name="Lian J.-Q."/>
            <person name="Ito T."/>
            <person name="Kanamori M."/>
            <person name="Matsumaru H."/>
            <person name="Maruyama A."/>
            <person name="Murakami H."/>
            <person name="Hosoyama A."/>
            <person name="Mizutani-Ui Y."/>
            <person name="Takahashi N.K."/>
            <person name="Sawano T."/>
            <person name="Inoue R."/>
            <person name="Kaito C."/>
            <person name="Sekimizu K."/>
            <person name="Hirakawa H."/>
            <person name="Kuhara S."/>
            <person name="Goto S."/>
            <person name="Yabuzaki J."/>
            <person name="Kanehisa M."/>
            <person name="Yamashita A."/>
            <person name="Oshima K."/>
            <person name="Furuya K."/>
            <person name="Yoshino C."/>
            <person name="Shiba T."/>
            <person name="Hattori M."/>
            <person name="Ogasawara N."/>
            <person name="Hayashi H."/>
            <person name="Hiramatsu K."/>
        </authorList>
    </citation>
    <scope>NUCLEOTIDE SEQUENCE [LARGE SCALE GENOMIC DNA]</scope>
    <source>
        <strain>N315</strain>
    </source>
</reference>
<reference key="2">
    <citation type="submission" date="2007-10" db="UniProtKB">
        <title>Shotgun proteomic analysis of total and membrane protein extracts of S. aureus strain N315.</title>
        <authorList>
            <person name="Vaezzadeh A.R."/>
            <person name="Deshusses J."/>
            <person name="Lescuyer P."/>
            <person name="Hochstrasser D.F."/>
        </authorList>
    </citation>
    <scope>IDENTIFICATION BY MASS SPECTROMETRY [LARGE SCALE ANALYSIS]</scope>
    <source>
        <strain>N315</strain>
    </source>
</reference>
<gene>
    <name evidence="1" type="primary">metG</name>
    <name type="synonym">metS</name>
    <name type="ordered locus">SA0448</name>
</gene>
<organism>
    <name type="scientific">Staphylococcus aureus (strain N315)</name>
    <dbReference type="NCBI Taxonomy" id="158879"/>
    <lineage>
        <taxon>Bacteria</taxon>
        <taxon>Bacillati</taxon>
        <taxon>Bacillota</taxon>
        <taxon>Bacilli</taxon>
        <taxon>Bacillales</taxon>
        <taxon>Staphylococcaceae</taxon>
        <taxon>Staphylococcus</taxon>
    </lineage>
</organism>
<accession>P67579</accession>
<accession>Q99WB3</accession>
<protein>
    <recommendedName>
        <fullName evidence="1">Methionine--tRNA ligase</fullName>
        <ecNumber evidence="1">6.1.1.10</ecNumber>
    </recommendedName>
    <alternativeName>
        <fullName evidence="1">Methionyl-tRNA synthetase</fullName>
        <shortName evidence="1">MetRS</shortName>
    </alternativeName>
</protein>
<evidence type="ECO:0000255" key="1">
    <source>
        <dbReference type="HAMAP-Rule" id="MF_01228"/>
    </source>
</evidence>